<name>PYRH_RHOPB</name>
<gene>
    <name evidence="1" type="primary">pyrH</name>
    <name type="ordered locus">RPC_2438</name>
</gene>
<sequence>MGEPVYRRVVIKLSGEYFAGDQSFGIDQPTIDRIAGDLIAAQKLGVEIAVVVGGGNIFRGVEVSSRGVSRPTGDTMGMLATVMNCLALEAAIERRAVAARTLSAFVMPQVCELFTRGAAHRYLAEGKIVLLAGGTGNPFFTTDTTAVLRAGEIGAQAVLKATNVDGVYSADPKKDPSAQRFERLSHSQALEGGYKVMDATAFALARETSLPIIVFSIAEAGSIGAILSGTGRGTVVAG</sequence>
<feature type="chain" id="PRO_0000323940" description="Uridylate kinase">
    <location>
        <begin position="1"/>
        <end position="238"/>
    </location>
</feature>
<feature type="binding site" evidence="1">
    <location>
        <begin position="12"/>
        <end position="15"/>
    </location>
    <ligand>
        <name>ATP</name>
        <dbReference type="ChEBI" id="CHEBI:30616"/>
    </ligand>
</feature>
<feature type="binding site" evidence="1">
    <location>
        <position position="54"/>
    </location>
    <ligand>
        <name>UMP</name>
        <dbReference type="ChEBI" id="CHEBI:57865"/>
    </ligand>
</feature>
<feature type="binding site" evidence="1">
    <location>
        <position position="55"/>
    </location>
    <ligand>
        <name>ATP</name>
        <dbReference type="ChEBI" id="CHEBI:30616"/>
    </ligand>
</feature>
<feature type="binding site" evidence="1">
    <location>
        <position position="59"/>
    </location>
    <ligand>
        <name>ATP</name>
        <dbReference type="ChEBI" id="CHEBI:30616"/>
    </ligand>
</feature>
<feature type="binding site" evidence="1">
    <location>
        <position position="74"/>
    </location>
    <ligand>
        <name>UMP</name>
        <dbReference type="ChEBI" id="CHEBI:57865"/>
    </ligand>
</feature>
<feature type="binding site" evidence="1">
    <location>
        <begin position="135"/>
        <end position="142"/>
    </location>
    <ligand>
        <name>UMP</name>
        <dbReference type="ChEBI" id="CHEBI:57865"/>
    </ligand>
</feature>
<feature type="binding site" evidence="1">
    <location>
        <position position="162"/>
    </location>
    <ligand>
        <name>ATP</name>
        <dbReference type="ChEBI" id="CHEBI:30616"/>
    </ligand>
</feature>
<feature type="binding site" evidence="1">
    <location>
        <position position="163"/>
    </location>
    <ligand>
        <name>ATP</name>
        <dbReference type="ChEBI" id="CHEBI:30616"/>
    </ligand>
</feature>
<feature type="binding site" evidence="1">
    <location>
        <position position="168"/>
    </location>
    <ligand>
        <name>ATP</name>
        <dbReference type="ChEBI" id="CHEBI:30616"/>
    </ligand>
</feature>
<feature type="binding site" evidence="1">
    <location>
        <position position="171"/>
    </location>
    <ligand>
        <name>ATP</name>
        <dbReference type="ChEBI" id="CHEBI:30616"/>
    </ligand>
</feature>
<evidence type="ECO:0000255" key="1">
    <source>
        <dbReference type="HAMAP-Rule" id="MF_01220"/>
    </source>
</evidence>
<proteinExistence type="inferred from homology"/>
<organism>
    <name type="scientific">Rhodopseudomonas palustris (strain BisB18)</name>
    <dbReference type="NCBI Taxonomy" id="316056"/>
    <lineage>
        <taxon>Bacteria</taxon>
        <taxon>Pseudomonadati</taxon>
        <taxon>Pseudomonadota</taxon>
        <taxon>Alphaproteobacteria</taxon>
        <taxon>Hyphomicrobiales</taxon>
        <taxon>Nitrobacteraceae</taxon>
        <taxon>Rhodopseudomonas</taxon>
    </lineage>
</organism>
<dbReference type="EC" id="2.7.4.22" evidence="1"/>
<dbReference type="EMBL" id="CP000301">
    <property type="protein sequence ID" value="ABD87989.1"/>
    <property type="molecule type" value="Genomic_DNA"/>
</dbReference>
<dbReference type="SMR" id="Q215E7"/>
<dbReference type="STRING" id="316056.RPC_2438"/>
<dbReference type="KEGG" id="rpc:RPC_2438"/>
<dbReference type="eggNOG" id="COG0528">
    <property type="taxonomic scope" value="Bacteria"/>
</dbReference>
<dbReference type="HOGENOM" id="CLU_033861_0_0_5"/>
<dbReference type="OrthoDB" id="9807458at2"/>
<dbReference type="UniPathway" id="UPA00159">
    <property type="reaction ID" value="UER00275"/>
</dbReference>
<dbReference type="GO" id="GO:0005829">
    <property type="term" value="C:cytosol"/>
    <property type="evidence" value="ECO:0007669"/>
    <property type="project" value="TreeGrafter"/>
</dbReference>
<dbReference type="GO" id="GO:0005524">
    <property type="term" value="F:ATP binding"/>
    <property type="evidence" value="ECO:0007669"/>
    <property type="project" value="UniProtKB-KW"/>
</dbReference>
<dbReference type="GO" id="GO:0033862">
    <property type="term" value="F:UMP kinase activity"/>
    <property type="evidence" value="ECO:0007669"/>
    <property type="project" value="UniProtKB-EC"/>
</dbReference>
<dbReference type="GO" id="GO:0044210">
    <property type="term" value="P:'de novo' CTP biosynthetic process"/>
    <property type="evidence" value="ECO:0007669"/>
    <property type="project" value="UniProtKB-UniRule"/>
</dbReference>
<dbReference type="GO" id="GO:0006225">
    <property type="term" value="P:UDP biosynthetic process"/>
    <property type="evidence" value="ECO:0007669"/>
    <property type="project" value="TreeGrafter"/>
</dbReference>
<dbReference type="CDD" id="cd04254">
    <property type="entry name" value="AAK_UMPK-PyrH-Ec"/>
    <property type="match status" value="1"/>
</dbReference>
<dbReference type="FunFam" id="3.40.1160.10:FF:000001">
    <property type="entry name" value="Uridylate kinase"/>
    <property type="match status" value="1"/>
</dbReference>
<dbReference type="Gene3D" id="3.40.1160.10">
    <property type="entry name" value="Acetylglutamate kinase-like"/>
    <property type="match status" value="1"/>
</dbReference>
<dbReference type="HAMAP" id="MF_01220_B">
    <property type="entry name" value="PyrH_B"/>
    <property type="match status" value="1"/>
</dbReference>
<dbReference type="InterPro" id="IPR036393">
    <property type="entry name" value="AceGlu_kinase-like_sf"/>
</dbReference>
<dbReference type="InterPro" id="IPR001048">
    <property type="entry name" value="Asp/Glu/Uridylate_kinase"/>
</dbReference>
<dbReference type="InterPro" id="IPR011817">
    <property type="entry name" value="Uridylate_kinase"/>
</dbReference>
<dbReference type="InterPro" id="IPR015963">
    <property type="entry name" value="Uridylate_kinase_bac"/>
</dbReference>
<dbReference type="NCBIfam" id="TIGR02075">
    <property type="entry name" value="pyrH_bact"/>
    <property type="match status" value="1"/>
</dbReference>
<dbReference type="PANTHER" id="PTHR42833">
    <property type="entry name" value="URIDYLATE KINASE"/>
    <property type="match status" value="1"/>
</dbReference>
<dbReference type="PANTHER" id="PTHR42833:SF4">
    <property type="entry name" value="URIDYLATE KINASE PUMPKIN, CHLOROPLASTIC"/>
    <property type="match status" value="1"/>
</dbReference>
<dbReference type="Pfam" id="PF00696">
    <property type="entry name" value="AA_kinase"/>
    <property type="match status" value="1"/>
</dbReference>
<dbReference type="PIRSF" id="PIRSF005650">
    <property type="entry name" value="Uridylate_kin"/>
    <property type="match status" value="1"/>
</dbReference>
<dbReference type="SUPFAM" id="SSF53633">
    <property type="entry name" value="Carbamate kinase-like"/>
    <property type="match status" value="1"/>
</dbReference>
<keyword id="KW-0067">ATP-binding</keyword>
<keyword id="KW-0963">Cytoplasm</keyword>
<keyword id="KW-0418">Kinase</keyword>
<keyword id="KW-0547">Nucleotide-binding</keyword>
<keyword id="KW-0665">Pyrimidine biosynthesis</keyword>
<keyword id="KW-0808">Transferase</keyword>
<accession>Q215E7</accession>
<comment type="function">
    <text evidence="1">Catalyzes the reversible phosphorylation of UMP to UDP.</text>
</comment>
<comment type="catalytic activity">
    <reaction evidence="1">
        <text>UMP + ATP = UDP + ADP</text>
        <dbReference type="Rhea" id="RHEA:24400"/>
        <dbReference type="ChEBI" id="CHEBI:30616"/>
        <dbReference type="ChEBI" id="CHEBI:57865"/>
        <dbReference type="ChEBI" id="CHEBI:58223"/>
        <dbReference type="ChEBI" id="CHEBI:456216"/>
        <dbReference type="EC" id="2.7.4.22"/>
    </reaction>
</comment>
<comment type="activity regulation">
    <text evidence="1">Inhibited by UTP.</text>
</comment>
<comment type="pathway">
    <text evidence="1">Pyrimidine metabolism; CTP biosynthesis via de novo pathway; UDP from UMP (UMPK route): step 1/1.</text>
</comment>
<comment type="subunit">
    <text evidence="1">Homohexamer.</text>
</comment>
<comment type="subcellular location">
    <subcellularLocation>
        <location evidence="1">Cytoplasm</location>
    </subcellularLocation>
</comment>
<comment type="similarity">
    <text evidence="1">Belongs to the UMP kinase family.</text>
</comment>
<reference key="1">
    <citation type="submission" date="2006-03" db="EMBL/GenBank/DDBJ databases">
        <title>Complete sequence of Rhodopseudomonas palustris BisB18.</title>
        <authorList>
            <consortium name="US DOE Joint Genome Institute"/>
            <person name="Copeland A."/>
            <person name="Lucas S."/>
            <person name="Lapidus A."/>
            <person name="Barry K."/>
            <person name="Detter J.C."/>
            <person name="Glavina del Rio T."/>
            <person name="Hammon N."/>
            <person name="Israni S."/>
            <person name="Dalin E."/>
            <person name="Tice H."/>
            <person name="Pitluck S."/>
            <person name="Chain P."/>
            <person name="Malfatti S."/>
            <person name="Shin M."/>
            <person name="Vergez L."/>
            <person name="Schmutz J."/>
            <person name="Larimer F."/>
            <person name="Land M."/>
            <person name="Hauser L."/>
            <person name="Pelletier D.A."/>
            <person name="Kyrpides N."/>
            <person name="Anderson I."/>
            <person name="Oda Y."/>
            <person name="Harwood C.S."/>
            <person name="Richardson P."/>
        </authorList>
    </citation>
    <scope>NUCLEOTIDE SEQUENCE [LARGE SCALE GENOMIC DNA]</scope>
    <source>
        <strain>BisB18</strain>
    </source>
</reference>
<protein>
    <recommendedName>
        <fullName evidence="1">Uridylate kinase</fullName>
        <shortName evidence="1">UK</shortName>
        <ecNumber evidence="1">2.7.4.22</ecNumber>
    </recommendedName>
    <alternativeName>
        <fullName evidence="1">Uridine monophosphate kinase</fullName>
        <shortName evidence="1">UMP kinase</shortName>
        <shortName evidence="1">UMPK</shortName>
    </alternativeName>
</protein>